<gene>
    <name evidence="1" type="primary">rpsG</name>
    <name type="ordered locus">Daud_0221</name>
</gene>
<dbReference type="EMBL" id="CP000860">
    <property type="protein sequence ID" value="ACA58782.1"/>
    <property type="molecule type" value="Genomic_DNA"/>
</dbReference>
<dbReference type="RefSeq" id="WP_012301374.1">
    <property type="nucleotide sequence ID" value="NC_010424.1"/>
</dbReference>
<dbReference type="SMR" id="B1I1I4"/>
<dbReference type="STRING" id="477974.Daud_0221"/>
<dbReference type="KEGG" id="dau:Daud_0221"/>
<dbReference type="eggNOG" id="COG0049">
    <property type="taxonomic scope" value="Bacteria"/>
</dbReference>
<dbReference type="HOGENOM" id="CLU_072226_1_1_9"/>
<dbReference type="OrthoDB" id="9807653at2"/>
<dbReference type="Proteomes" id="UP000008544">
    <property type="component" value="Chromosome"/>
</dbReference>
<dbReference type="GO" id="GO:0015935">
    <property type="term" value="C:small ribosomal subunit"/>
    <property type="evidence" value="ECO:0007669"/>
    <property type="project" value="InterPro"/>
</dbReference>
<dbReference type="GO" id="GO:0019843">
    <property type="term" value="F:rRNA binding"/>
    <property type="evidence" value="ECO:0007669"/>
    <property type="project" value="UniProtKB-UniRule"/>
</dbReference>
<dbReference type="GO" id="GO:0003735">
    <property type="term" value="F:structural constituent of ribosome"/>
    <property type="evidence" value="ECO:0007669"/>
    <property type="project" value="InterPro"/>
</dbReference>
<dbReference type="GO" id="GO:0000049">
    <property type="term" value="F:tRNA binding"/>
    <property type="evidence" value="ECO:0007669"/>
    <property type="project" value="UniProtKB-UniRule"/>
</dbReference>
<dbReference type="GO" id="GO:0006412">
    <property type="term" value="P:translation"/>
    <property type="evidence" value="ECO:0007669"/>
    <property type="project" value="UniProtKB-UniRule"/>
</dbReference>
<dbReference type="CDD" id="cd14869">
    <property type="entry name" value="uS7_Bacteria"/>
    <property type="match status" value="1"/>
</dbReference>
<dbReference type="FunFam" id="1.10.455.10:FF:000001">
    <property type="entry name" value="30S ribosomal protein S7"/>
    <property type="match status" value="1"/>
</dbReference>
<dbReference type="Gene3D" id="1.10.455.10">
    <property type="entry name" value="Ribosomal protein S7 domain"/>
    <property type="match status" value="1"/>
</dbReference>
<dbReference type="HAMAP" id="MF_00480_B">
    <property type="entry name" value="Ribosomal_uS7_B"/>
    <property type="match status" value="1"/>
</dbReference>
<dbReference type="InterPro" id="IPR000235">
    <property type="entry name" value="Ribosomal_uS7"/>
</dbReference>
<dbReference type="InterPro" id="IPR005717">
    <property type="entry name" value="Ribosomal_uS7_bac/org-type"/>
</dbReference>
<dbReference type="InterPro" id="IPR020606">
    <property type="entry name" value="Ribosomal_uS7_CS"/>
</dbReference>
<dbReference type="InterPro" id="IPR023798">
    <property type="entry name" value="Ribosomal_uS7_dom"/>
</dbReference>
<dbReference type="InterPro" id="IPR036823">
    <property type="entry name" value="Ribosomal_uS7_dom_sf"/>
</dbReference>
<dbReference type="NCBIfam" id="TIGR01029">
    <property type="entry name" value="rpsG_bact"/>
    <property type="match status" value="1"/>
</dbReference>
<dbReference type="PANTHER" id="PTHR11205">
    <property type="entry name" value="RIBOSOMAL PROTEIN S7"/>
    <property type="match status" value="1"/>
</dbReference>
<dbReference type="Pfam" id="PF00177">
    <property type="entry name" value="Ribosomal_S7"/>
    <property type="match status" value="1"/>
</dbReference>
<dbReference type="PIRSF" id="PIRSF002122">
    <property type="entry name" value="RPS7p_RPS7a_RPS5e_RPS7o"/>
    <property type="match status" value="1"/>
</dbReference>
<dbReference type="SUPFAM" id="SSF47973">
    <property type="entry name" value="Ribosomal protein S7"/>
    <property type="match status" value="1"/>
</dbReference>
<dbReference type="PROSITE" id="PS00052">
    <property type="entry name" value="RIBOSOMAL_S7"/>
    <property type="match status" value="1"/>
</dbReference>
<reference key="1">
    <citation type="submission" date="2007-10" db="EMBL/GenBank/DDBJ databases">
        <title>Complete sequence of chromosome of Desulforudis audaxviator MP104C.</title>
        <authorList>
            <person name="Copeland A."/>
            <person name="Lucas S."/>
            <person name="Lapidus A."/>
            <person name="Barry K."/>
            <person name="Glavina del Rio T."/>
            <person name="Dalin E."/>
            <person name="Tice H."/>
            <person name="Bruce D."/>
            <person name="Pitluck S."/>
            <person name="Lowry S.R."/>
            <person name="Larimer F."/>
            <person name="Land M.L."/>
            <person name="Hauser L."/>
            <person name="Kyrpides N."/>
            <person name="Ivanova N.N."/>
            <person name="Richardson P."/>
        </authorList>
    </citation>
    <scope>NUCLEOTIDE SEQUENCE [LARGE SCALE GENOMIC DNA]</scope>
    <source>
        <strain>MP104C</strain>
    </source>
</reference>
<evidence type="ECO:0000255" key="1">
    <source>
        <dbReference type="HAMAP-Rule" id="MF_00480"/>
    </source>
</evidence>
<evidence type="ECO:0000305" key="2"/>
<accession>B1I1I4</accession>
<organism>
    <name type="scientific">Desulforudis audaxviator (strain MP104C)</name>
    <dbReference type="NCBI Taxonomy" id="477974"/>
    <lineage>
        <taxon>Bacteria</taxon>
        <taxon>Bacillati</taxon>
        <taxon>Bacillota</taxon>
        <taxon>Clostridia</taxon>
        <taxon>Thermoanaerobacterales</taxon>
        <taxon>Candidatus Desulforudaceae</taxon>
        <taxon>Candidatus Desulforudis</taxon>
    </lineage>
</organism>
<proteinExistence type="inferred from homology"/>
<keyword id="KW-1185">Reference proteome</keyword>
<keyword id="KW-0687">Ribonucleoprotein</keyword>
<keyword id="KW-0689">Ribosomal protein</keyword>
<keyword id="KW-0694">RNA-binding</keyword>
<keyword id="KW-0699">rRNA-binding</keyword>
<keyword id="KW-0820">tRNA-binding</keyword>
<name>RS7_DESAP</name>
<protein>
    <recommendedName>
        <fullName evidence="1">Small ribosomal subunit protein uS7</fullName>
    </recommendedName>
    <alternativeName>
        <fullName evidence="2">30S ribosomal protein S7</fullName>
    </alternativeName>
</protein>
<comment type="function">
    <text evidence="1">One of the primary rRNA binding proteins, it binds directly to 16S rRNA where it nucleates assembly of the head domain of the 30S subunit. Is located at the subunit interface close to the decoding center, probably blocks exit of the E-site tRNA.</text>
</comment>
<comment type="subunit">
    <text evidence="1">Part of the 30S ribosomal subunit. Contacts proteins S9 and S11.</text>
</comment>
<comment type="similarity">
    <text evidence="1">Belongs to the universal ribosomal protein uS7 family.</text>
</comment>
<feature type="chain" id="PRO_1000125931" description="Small ribosomal subunit protein uS7">
    <location>
        <begin position="1"/>
        <end position="156"/>
    </location>
</feature>
<sequence>MPRRGAVPKREAVADPVYGSKMLTKLINQVMLDGKRSVAEAICYGALDIVRRKTGREPLEVLEQAMKNVMPIVETRPRRVGGANYQVPVEVRADRRQTLGVRWITSFARQRPGKSMKEKLAAEIMDAANGVGGAVKKKEDTHRMAEANKAFAHYRW</sequence>